<evidence type="ECO:0000255" key="1">
    <source>
        <dbReference type="HAMAP-Rule" id="MF_00101"/>
    </source>
</evidence>
<dbReference type="EC" id="2.7.8.7" evidence="1"/>
<dbReference type="EMBL" id="CP001074">
    <property type="protein sequence ID" value="ACE90435.1"/>
    <property type="molecule type" value="Genomic_DNA"/>
</dbReference>
<dbReference type="SMR" id="B3PUN6"/>
<dbReference type="KEGG" id="rec:RHECIAT_CH0001456"/>
<dbReference type="eggNOG" id="COG0736">
    <property type="taxonomic scope" value="Bacteria"/>
</dbReference>
<dbReference type="HOGENOM" id="CLU_089696_0_2_5"/>
<dbReference type="Proteomes" id="UP000008817">
    <property type="component" value="Chromosome"/>
</dbReference>
<dbReference type="GO" id="GO:0005737">
    <property type="term" value="C:cytoplasm"/>
    <property type="evidence" value="ECO:0007669"/>
    <property type="project" value="UniProtKB-SubCell"/>
</dbReference>
<dbReference type="GO" id="GO:0008897">
    <property type="term" value="F:holo-[acyl-carrier-protein] synthase activity"/>
    <property type="evidence" value="ECO:0007669"/>
    <property type="project" value="UniProtKB-UniRule"/>
</dbReference>
<dbReference type="GO" id="GO:0000287">
    <property type="term" value="F:magnesium ion binding"/>
    <property type="evidence" value="ECO:0007669"/>
    <property type="project" value="UniProtKB-UniRule"/>
</dbReference>
<dbReference type="GO" id="GO:0006633">
    <property type="term" value="P:fatty acid biosynthetic process"/>
    <property type="evidence" value="ECO:0007669"/>
    <property type="project" value="UniProtKB-UniRule"/>
</dbReference>
<dbReference type="Gene3D" id="3.90.470.20">
    <property type="entry name" value="4'-phosphopantetheinyl transferase domain"/>
    <property type="match status" value="1"/>
</dbReference>
<dbReference type="HAMAP" id="MF_00101">
    <property type="entry name" value="AcpS"/>
    <property type="match status" value="1"/>
</dbReference>
<dbReference type="InterPro" id="IPR008278">
    <property type="entry name" value="4-PPantetheinyl_Trfase_dom"/>
</dbReference>
<dbReference type="InterPro" id="IPR037143">
    <property type="entry name" value="4-PPantetheinyl_Trfase_dom_sf"/>
</dbReference>
<dbReference type="InterPro" id="IPR002582">
    <property type="entry name" value="ACPS"/>
</dbReference>
<dbReference type="InterPro" id="IPR004568">
    <property type="entry name" value="Ppantetheine-prot_Trfase_dom"/>
</dbReference>
<dbReference type="NCBIfam" id="TIGR00516">
    <property type="entry name" value="acpS"/>
    <property type="match status" value="1"/>
</dbReference>
<dbReference type="NCBIfam" id="TIGR00556">
    <property type="entry name" value="pantethn_trn"/>
    <property type="match status" value="1"/>
</dbReference>
<dbReference type="Pfam" id="PF01648">
    <property type="entry name" value="ACPS"/>
    <property type="match status" value="1"/>
</dbReference>
<dbReference type="SUPFAM" id="SSF56214">
    <property type="entry name" value="4'-phosphopantetheinyl transferase"/>
    <property type="match status" value="1"/>
</dbReference>
<proteinExistence type="inferred from homology"/>
<name>ACPS_RHIE6</name>
<keyword id="KW-0963">Cytoplasm</keyword>
<keyword id="KW-0275">Fatty acid biosynthesis</keyword>
<keyword id="KW-0276">Fatty acid metabolism</keyword>
<keyword id="KW-0444">Lipid biosynthesis</keyword>
<keyword id="KW-0443">Lipid metabolism</keyword>
<keyword id="KW-0460">Magnesium</keyword>
<keyword id="KW-0479">Metal-binding</keyword>
<keyword id="KW-0808">Transferase</keyword>
<organism>
    <name type="scientific">Rhizobium etli (strain CIAT 652)</name>
    <dbReference type="NCBI Taxonomy" id="491916"/>
    <lineage>
        <taxon>Bacteria</taxon>
        <taxon>Pseudomonadati</taxon>
        <taxon>Pseudomonadota</taxon>
        <taxon>Alphaproteobacteria</taxon>
        <taxon>Hyphomicrobiales</taxon>
        <taxon>Rhizobiaceae</taxon>
        <taxon>Rhizobium/Agrobacterium group</taxon>
        <taxon>Rhizobium</taxon>
    </lineage>
</organism>
<feature type="chain" id="PRO_1000093906" description="Holo-[acyl-carrier-protein] synthase">
    <location>
        <begin position="1"/>
        <end position="134"/>
    </location>
</feature>
<feature type="binding site" evidence="1">
    <location>
        <position position="8"/>
    </location>
    <ligand>
        <name>Mg(2+)</name>
        <dbReference type="ChEBI" id="CHEBI:18420"/>
    </ligand>
</feature>
<feature type="binding site" evidence="1">
    <location>
        <position position="57"/>
    </location>
    <ligand>
        <name>Mg(2+)</name>
        <dbReference type="ChEBI" id="CHEBI:18420"/>
    </ligand>
</feature>
<comment type="function">
    <text evidence="1">Transfers the 4'-phosphopantetheine moiety from coenzyme A to a Ser of acyl-carrier-protein.</text>
</comment>
<comment type="catalytic activity">
    <reaction evidence="1">
        <text>apo-[ACP] + CoA = holo-[ACP] + adenosine 3',5'-bisphosphate + H(+)</text>
        <dbReference type="Rhea" id="RHEA:12068"/>
        <dbReference type="Rhea" id="RHEA-COMP:9685"/>
        <dbReference type="Rhea" id="RHEA-COMP:9690"/>
        <dbReference type="ChEBI" id="CHEBI:15378"/>
        <dbReference type="ChEBI" id="CHEBI:29999"/>
        <dbReference type="ChEBI" id="CHEBI:57287"/>
        <dbReference type="ChEBI" id="CHEBI:58343"/>
        <dbReference type="ChEBI" id="CHEBI:64479"/>
        <dbReference type="EC" id="2.7.8.7"/>
    </reaction>
</comment>
<comment type="cofactor">
    <cofactor evidence="1">
        <name>Mg(2+)</name>
        <dbReference type="ChEBI" id="CHEBI:18420"/>
    </cofactor>
</comment>
<comment type="subcellular location">
    <subcellularLocation>
        <location evidence="1">Cytoplasm</location>
    </subcellularLocation>
</comment>
<comment type="similarity">
    <text evidence="1">Belongs to the P-Pant transferase superfamily. AcpS family.</text>
</comment>
<sequence length="134" mass="14674">MIIGIGSDLIDIRRVEKSIERFGERFTHRCFTEIERARSDRRANRAESYAKRFAAKEACSKALGTGLAQGVFWKDMGVVNLPSGKPTMVLSGGAAVILESMLPAGHRAAIHLTITDDYPLAQAFVIIEALPESL</sequence>
<accession>B3PUN6</accession>
<gene>
    <name evidence="1" type="primary">acpS</name>
    <name type="ordered locus">RHECIAT_CH0001456</name>
</gene>
<protein>
    <recommendedName>
        <fullName evidence="1">Holo-[acyl-carrier-protein] synthase</fullName>
        <shortName evidence="1">Holo-ACP synthase</shortName>
        <ecNumber evidence="1">2.7.8.7</ecNumber>
    </recommendedName>
    <alternativeName>
        <fullName evidence="1">4'-phosphopantetheinyl transferase AcpS</fullName>
    </alternativeName>
</protein>
<reference key="1">
    <citation type="journal article" date="2010" name="Appl. Environ. Microbiol.">
        <title>Conserved symbiotic plasmid DNA sequences in the multireplicon pangenomic structure of Rhizobium etli.</title>
        <authorList>
            <person name="Gonzalez V."/>
            <person name="Acosta J.L."/>
            <person name="Santamaria R.I."/>
            <person name="Bustos P."/>
            <person name="Fernandez J.L."/>
            <person name="Hernandez Gonzalez I.L."/>
            <person name="Diaz R."/>
            <person name="Flores M."/>
            <person name="Palacios R."/>
            <person name="Mora J."/>
            <person name="Davila G."/>
        </authorList>
    </citation>
    <scope>NUCLEOTIDE SEQUENCE [LARGE SCALE GENOMIC DNA]</scope>
    <source>
        <strain>CIAT 652</strain>
    </source>
</reference>